<organism>
    <name type="scientific">Micromonospora olivasterospora</name>
    <dbReference type="NCBI Taxonomy" id="1880"/>
    <lineage>
        <taxon>Bacteria</taxon>
        <taxon>Bacillati</taxon>
        <taxon>Actinomycetota</taxon>
        <taxon>Actinomycetes</taxon>
        <taxon>Micromonosporales</taxon>
        <taxon>Micromonosporaceae</taxon>
        <taxon>Micromonospora</taxon>
    </lineage>
</organism>
<sequence length="293" mass="30922">MLAAAKYRNLDPAFVERLAQEAAERFRDRGQAVKYAKRKLHQAFGAFVAGTPAQAVAACVAKIAAGAEPKEAGREAMRAHASSAERVDWLEPFYERVAQWCGPASSVIDLACGLNPLAVPWMALAPGATYACYDVDRTMAEALRALGTVYPVRVNAAAVDLVAAVPAAGVDVALVLKTLTTVEQQRGGRRVAEYRRELTAVQHHSDGARSLSGRRGYADDPDAIVQRAVHGTGYEVVDEAAFGTEALYHLVPLAGTAGRPAPAEGAAEPGATRPVVDVPATARPDADRVDPTG</sequence>
<accession>Q08325</accession>
<proteinExistence type="evidence at protein level"/>
<gene>
    <name type="primary">fmrO</name>
</gene>
<dbReference type="EC" id="2.1.1.179"/>
<dbReference type="EMBL" id="D13171">
    <property type="protein sequence ID" value="BAA02451.2"/>
    <property type="molecule type" value="Genomic_DNA"/>
</dbReference>
<dbReference type="SMR" id="Q08325"/>
<dbReference type="BRENDA" id="2.1.1.179">
    <property type="organism ID" value="12910"/>
</dbReference>
<dbReference type="GO" id="GO:0008649">
    <property type="term" value="F:rRNA methyltransferase activity"/>
    <property type="evidence" value="ECO:0007669"/>
    <property type="project" value="InterPro"/>
</dbReference>
<dbReference type="GO" id="GO:0046677">
    <property type="term" value="P:response to antibiotic"/>
    <property type="evidence" value="ECO:0007669"/>
    <property type="project" value="UniProtKB-KW"/>
</dbReference>
<dbReference type="Gene3D" id="1.10.8.10">
    <property type="entry name" value="DNA helicase RuvA subunit, C-terminal domain"/>
    <property type="match status" value="1"/>
</dbReference>
<dbReference type="Gene3D" id="3.40.50.150">
    <property type="entry name" value="Vaccinia Virus protein VP39"/>
    <property type="match status" value="1"/>
</dbReference>
<dbReference type="InterPro" id="IPR025981">
    <property type="entry name" value="rRNA_MeTrfase"/>
</dbReference>
<dbReference type="InterPro" id="IPR010769">
    <property type="entry name" value="rRNA_MeTrfase_GmN_bac"/>
</dbReference>
<dbReference type="InterPro" id="IPR029063">
    <property type="entry name" value="SAM-dependent_MTases_sf"/>
</dbReference>
<dbReference type="Pfam" id="PF07091">
    <property type="entry name" value="FmrO"/>
    <property type="match status" value="1"/>
</dbReference>
<dbReference type="PIRSF" id="PIRSF015852">
    <property type="entry name" value="RRNA_mtase_Grm"/>
    <property type="match status" value="1"/>
</dbReference>
<dbReference type="SUPFAM" id="SSF53335">
    <property type="entry name" value="S-adenosyl-L-methionine-dependent methyltransferases"/>
    <property type="match status" value="1"/>
</dbReference>
<protein>
    <recommendedName>
        <fullName>16S rRNA (guanine(1405)-N(7))-methyltransferase</fullName>
        <ecNumber>2.1.1.179</ecNumber>
    </recommendedName>
    <alternativeName>
        <fullName>16S rRNA m7G1405 methyltransferase</fullName>
    </alternativeName>
    <alternativeName>
        <fullName>Fortimicin A-resistance methyltransferase</fullName>
    </alternativeName>
</protein>
<comment type="function">
    <text evidence="1 3">Specifically methylates the N(7) position of guanine 1405 in 16S rRNA (By similarity). Confers resistance to aminoglycosides.</text>
</comment>
<comment type="catalytic activity">
    <reaction>
        <text>guanosine(1405) in 16S rRNA + S-adenosyl-L-methionine = N(7)-methylguanosine(1405) in 16S rRNA + S-adenosyl-L-homocysteine</text>
        <dbReference type="Rhea" id="RHEA:42772"/>
        <dbReference type="Rhea" id="RHEA-COMP:10225"/>
        <dbReference type="Rhea" id="RHEA-COMP:10226"/>
        <dbReference type="ChEBI" id="CHEBI:57856"/>
        <dbReference type="ChEBI" id="CHEBI:59789"/>
        <dbReference type="ChEBI" id="CHEBI:74269"/>
        <dbReference type="ChEBI" id="CHEBI:74480"/>
        <dbReference type="EC" id="2.1.1.179"/>
    </reaction>
</comment>
<comment type="miscellaneous">
    <text>Protects M.olivasterospora, which is an antibiotic-producing bacterium, against self-intoxication.</text>
</comment>
<comment type="similarity">
    <text evidence="4">Belongs to the methyltransferase superfamily. Aminoglycoside resistance family.</text>
</comment>
<evidence type="ECO:0000250" key="1"/>
<evidence type="ECO:0000256" key="2">
    <source>
        <dbReference type="SAM" id="MobiDB-lite"/>
    </source>
</evidence>
<evidence type="ECO:0000269" key="3">
    <source>
    </source>
</evidence>
<evidence type="ECO:0000305" key="4"/>
<feature type="chain" id="PRO_0000087316" description="16S rRNA (guanine(1405)-N(7))-methyltransferase">
    <location>
        <begin position="1"/>
        <end position="293"/>
    </location>
</feature>
<feature type="region of interest" description="Disordered" evidence="2">
    <location>
        <begin position="258"/>
        <end position="293"/>
    </location>
</feature>
<feature type="compositionally biased region" description="Low complexity" evidence="2">
    <location>
        <begin position="258"/>
        <end position="274"/>
    </location>
</feature>
<feature type="compositionally biased region" description="Basic and acidic residues" evidence="2">
    <location>
        <begin position="284"/>
        <end position="293"/>
    </location>
</feature>
<feature type="binding site" evidence="1">
    <location>
        <position position="47"/>
    </location>
    <ligand>
        <name>S-adenosyl-L-methionine</name>
        <dbReference type="ChEBI" id="CHEBI:59789"/>
    </ligand>
</feature>
<feature type="binding site" evidence="1">
    <location>
        <begin position="80"/>
        <end position="82"/>
    </location>
    <ligand>
        <name>S-adenosyl-L-methionine</name>
        <dbReference type="ChEBI" id="CHEBI:59789"/>
    </ligand>
</feature>
<feature type="binding site" evidence="1">
    <location>
        <position position="86"/>
    </location>
    <ligand>
        <name>S-adenosyl-L-methionine</name>
        <dbReference type="ChEBI" id="CHEBI:59789"/>
    </ligand>
</feature>
<feature type="binding site" evidence="1">
    <location>
        <position position="111"/>
    </location>
    <ligand>
        <name>S-adenosyl-L-methionine</name>
        <dbReference type="ChEBI" id="CHEBI:59789"/>
    </ligand>
</feature>
<feature type="binding site" evidence="1">
    <location>
        <position position="134"/>
    </location>
    <ligand>
        <name>S-adenosyl-L-methionine</name>
        <dbReference type="ChEBI" id="CHEBI:59789"/>
    </ligand>
</feature>
<feature type="binding site" evidence="1">
    <location>
        <begin position="160"/>
        <end position="161"/>
    </location>
    <ligand>
        <name>S-adenosyl-L-methionine</name>
        <dbReference type="ChEBI" id="CHEBI:59789"/>
    </ligand>
</feature>
<feature type="binding site" evidence="1">
    <location>
        <position position="176"/>
    </location>
    <ligand>
        <name>S-adenosyl-L-methionine</name>
        <dbReference type="ChEBI" id="CHEBI:59789"/>
    </ligand>
</feature>
<feature type="binding site" evidence="1">
    <location>
        <position position="185"/>
    </location>
    <ligand>
        <name>S-adenosyl-L-methionine</name>
        <dbReference type="ChEBI" id="CHEBI:59789"/>
    </ligand>
</feature>
<keyword id="KW-0046">Antibiotic resistance</keyword>
<keyword id="KW-0489">Methyltransferase</keyword>
<keyword id="KW-0698">rRNA processing</keyword>
<keyword id="KW-0949">S-adenosyl-L-methionine</keyword>
<keyword id="KW-0808">Transferase</keyword>
<reference key="1">
    <citation type="journal article" date="1993" name="Gene">
        <title>Analysis of the self-defense gene (fmrO) of a fortimicin A (astromicin) producer, Micromonospora olivasterospora: comparison with other aminoglycoside-resistance-encoding genes.</title>
        <authorList>
            <person name="Ohta T."/>
            <person name="Hasegawa M."/>
        </authorList>
    </citation>
    <scope>NUCLEOTIDE SEQUENCE [GENOMIC DNA]</scope>
    <scope>FUNCTION IN ANTIBIOTIC RESISTANCE</scope>
</reference>
<reference key="2">
    <citation type="submission" date="2005-04" db="EMBL/GenBank/DDBJ databases">
        <authorList>
            <person name="Ohta T."/>
            <person name="Hasegawa M."/>
        </authorList>
    </citation>
    <scope>SEQUENCE REVISION TO 189-208</scope>
</reference>
<name>FMRO_MICOL</name>